<protein>
    <recommendedName>
        <fullName evidence="1">GTPase Der</fullName>
    </recommendedName>
    <alternativeName>
        <fullName evidence="1">GTP-binding protein EngA</fullName>
    </alternativeName>
</protein>
<sequence>MVPVVALVGRPNVGKSTLFNRLTRTRDALVADFPGLTRDRKYGRAEIEGREFICIDTGGIDGTEDGVETRMAEQSLLAIEEADVVLFMVDARAGLMPADEAIAKHLRSREKPTFLVANKTDGLDPDQAVVDFYSLGLGEIYPIAASHGRGVLSLLEHVLLPWMEDLAPQEEVDEDAEYWAQFEAEENGEEEEEDDFDPQSLPIKLAIVGRPNVGKSTLTNRILGEERVVVYDMPGTTRDSIYIPMERDGREYVLIDTAGVRKRGKITDAVEKFSVIKTLQAIEDANVVMLVIDAREGISDQDLSLLGFILNSGRSLVIVVNKWDGLSQEVKEQVKETLDFRLGFIDFARVHFISALHGSGVGNLFESVREAYDSSTRRVGTSMLTRIMTMAVEDHQPPLVRGRRVKLKYAHAGGYNPPIVVIHGNQVKDLPDSYKRYLMNYFRKSLDVMGSPIRIQFKEGENPYANKRNTLTPTQMRKRKRLMKHIKKNK</sequence>
<evidence type="ECO:0000255" key="1">
    <source>
        <dbReference type="HAMAP-Rule" id="MF_00195"/>
    </source>
</evidence>
<reference key="1">
    <citation type="journal article" date="2009" name="PLoS Genet.">
        <title>Organised genome dynamics in the Escherichia coli species results in highly diverse adaptive paths.</title>
        <authorList>
            <person name="Touchon M."/>
            <person name="Hoede C."/>
            <person name="Tenaillon O."/>
            <person name="Barbe V."/>
            <person name="Baeriswyl S."/>
            <person name="Bidet P."/>
            <person name="Bingen E."/>
            <person name="Bonacorsi S."/>
            <person name="Bouchier C."/>
            <person name="Bouvet O."/>
            <person name="Calteau A."/>
            <person name="Chiapello H."/>
            <person name="Clermont O."/>
            <person name="Cruveiller S."/>
            <person name="Danchin A."/>
            <person name="Diard M."/>
            <person name="Dossat C."/>
            <person name="Karoui M.E."/>
            <person name="Frapy E."/>
            <person name="Garry L."/>
            <person name="Ghigo J.M."/>
            <person name="Gilles A.M."/>
            <person name="Johnson J."/>
            <person name="Le Bouguenec C."/>
            <person name="Lescat M."/>
            <person name="Mangenot S."/>
            <person name="Martinez-Jehanne V."/>
            <person name="Matic I."/>
            <person name="Nassif X."/>
            <person name="Oztas S."/>
            <person name="Petit M.A."/>
            <person name="Pichon C."/>
            <person name="Rouy Z."/>
            <person name="Ruf C.S."/>
            <person name="Schneider D."/>
            <person name="Tourret J."/>
            <person name="Vacherie B."/>
            <person name="Vallenet D."/>
            <person name="Medigue C."/>
            <person name="Rocha E.P.C."/>
            <person name="Denamur E."/>
        </authorList>
    </citation>
    <scope>NUCLEOTIDE SEQUENCE [LARGE SCALE GENOMIC DNA]</scope>
    <source>
        <strain>IAI1</strain>
    </source>
</reference>
<proteinExistence type="inferred from homology"/>
<feature type="chain" id="PRO_1000118645" description="GTPase Der">
    <location>
        <begin position="1"/>
        <end position="490"/>
    </location>
</feature>
<feature type="domain" description="EngA-type G 1">
    <location>
        <begin position="3"/>
        <end position="166"/>
    </location>
</feature>
<feature type="domain" description="EngA-type G 2">
    <location>
        <begin position="203"/>
        <end position="376"/>
    </location>
</feature>
<feature type="domain" description="KH-like" evidence="1">
    <location>
        <begin position="377"/>
        <end position="461"/>
    </location>
</feature>
<feature type="binding site" evidence="1">
    <location>
        <begin position="9"/>
        <end position="16"/>
    </location>
    <ligand>
        <name>GTP</name>
        <dbReference type="ChEBI" id="CHEBI:37565"/>
        <label>1</label>
    </ligand>
</feature>
<feature type="binding site" evidence="1">
    <location>
        <begin position="56"/>
        <end position="60"/>
    </location>
    <ligand>
        <name>GTP</name>
        <dbReference type="ChEBI" id="CHEBI:37565"/>
        <label>1</label>
    </ligand>
</feature>
<feature type="binding site" evidence="1">
    <location>
        <begin position="118"/>
        <end position="121"/>
    </location>
    <ligand>
        <name>GTP</name>
        <dbReference type="ChEBI" id="CHEBI:37565"/>
        <label>1</label>
    </ligand>
</feature>
<feature type="binding site" evidence="1">
    <location>
        <begin position="209"/>
        <end position="216"/>
    </location>
    <ligand>
        <name>GTP</name>
        <dbReference type="ChEBI" id="CHEBI:37565"/>
        <label>2</label>
    </ligand>
</feature>
<feature type="binding site" evidence="1">
    <location>
        <begin position="256"/>
        <end position="260"/>
    </location>
    <ligand>
        <name>GTP</name>
        <dbReference type="ChEBI" id="CHEBI:37565"/>
        <label>2</label>
    </ligand>
</feature>
<feature type="binding site" evidence="1">
    <location>
        <begin position="321"/>
        <end position="324"/>
    </location>
    <ligand>
        <name>GTP</name>
        <dbReference type="ChEBI" id="CHEBI:37565"/>
        <label>2</label>
    </ligand>
</feature>
<keyword id="KW-0342">GTP-binding</keyword>
<keyword id="KW-0547">Nucleotide-binding</keyword>
<keyword id="KW-0677">Repeat</keyword>
<keyword id="KW-0690">Ribosome biogenesis</keyword>
<comment type="function">
    <text evidence="1">GTPase that plays an essential role in the late steps of ribosome biogenesis.</text>
</comment>
<comment type="subunit">
    <text evidence="1">Associates with the 50S ribosomal subunit.</text>
</comment>
<comment type="similarity">
    <text evidence="1">Belongs to the TRAFAC class TrmE-Era-EngA-EngB-Septin-like GTPase superfamily. EngA (Der) GTPase family.</text>
</comment>
<accession>B7M7L5</accession>
<organism>
    <name type="scientific">Escherichia coli O8 (strain IAI1)</name>
    <dbReference type="NCBI Taxonomy" id="585034"/>
    <lineage>
        <taxon>Bacteria</taxon>
        <taxon>Pseudomonadati</taxon>
        <taxon>Pseudomonadota</taxon>
        <taxon>Gammaproteobacteria</taxon>
        <taxon>Enterobacterales</taxon>
        <taxon>Enterobacteriaceae</taxon>
        <taxon>Escherichia</taxon>
    </lineage>
</organism>
<gene>
    <name evidence="1" type="primary">der</name>
    <name type="synonym">engA</name>
    <name type="ordered locus">ECIAI1_2563</name>
</gene>
<dbReference type="EMBL" id="CU928160">
    <property type="protein sequence ID" value="CAQ99403.1"/>
    <property type="molecule type" value="Genomic_DNA"/>
</dbReference>
<dbReference type="RefSeq" id="WP_000249410.1">
    <property type="nucleotide sequence ID" value="NC_011741.1"/>
</dbReference>
<dbReference type="SMR" id="B7M7L5"/>
<dbReference type="GeneID" id="75206204"/>
<dbReference type="KEGG" id="ecr:ECIAI1_2563"/>
<dbReference type="HOGENOM" id="CLU_016077_6_2_6"/>
<dbReference type="GO" id="GO:0005525">
    <property type="term" value="F:GTP binding"/>
    <property type="evidence" value="ECO:0007669"/>
    <property type="project" value="UniProtKB-UniRule"/>
</dbReference>
<dbReference type="GO" id="GO:0043022">
    <property type="term" value="F:ribosome binding"/>
    <property type="evidence" value="ECO:0007669"/>
    <property type="project" value="TreeGrafter"/>
</dbReference>
<dbReference type="GO" id="GO:0042254">
    <property type="term" value="P:ribosome biogenesis"/>
    <property type="evidence" value="ECO:0007669"/>
    <property type="project" value="UniProtKB-KW"/>
</dbReference>
<dbReference type="CDD" id="cd01894">
    <property type="entry name" value="EngA1"/>
    <property type="match status" value="1"/>
</dbReference>
<dbReference type="CDD" id="cd01895">
    <property type="entry name" value="EngA2"/>
    <property type="match status" value="1"/>
</dbReference>
<dbReference type="FunFam" id="3.30.300.20:FF:000004">
    <property type="entry name" value="GTPase Der"/>
    <property type="match status" value="1"/>
</dbReference>
<dbReference type="FunFam" id="3.40.50.300:FF:000040">
    <property type="entry name" value="GTPase Der"/>
    <property type="match status" value="1"/>
</dbReference>
<dbReference type="FunFam" id="3.40.50.300:FF:000057">
    <property type="entry name" value="GTPase Der"/>
    <property type="match status" value="1"/>
</dbReference>
<dbReference type="Gene3D" id="3.30.300.20">
    <property type="match status" value="1"/>
</dbReference>
<dbReference type="Gene3D" id="3.40.50.300">
    <property type="entry name" value="P-loop containing nucleotide triphosphate hydrolases"/>
    <property type="match status" value="2"/>
</dbReference>
<dbReference type="HAMAP" id="MF_00195">
    <property type="entry name" value="GTPase_Der"/>
    <property type="match status" value="1"/>
</dbReference>
<dbReference type="InterPro" id="IPR031166">
    <property type="entry name" value="G_ENGA"/>
</dbReference>
<dbReference type="InterPro" id="IPR006073">
    <property type="entry name" value="GTP-bd"/>
</dbReference>
<dbReference type="InterPro" id="IPR016484">
    <property type="entry name" value="GTPase_Der"/>
</dbReference>
<dbReference type="InterPro" id="IPR032859">
    <property type="entry name" value="KH_dom-like"/>
</dbReference>
<dbReference type="InterPro" id="IPR015946">
    <property type="entry name" value="KH_dom-like_a/b"/>
</dbReference>
<dbReference type="InterPro" id="IPR027417">
    <property type="entry name" value="P-loop_NTPase"/>
</dbReference>
<dbReference type="InterPro" id="IPR005225">
    <property type="entry name" value="Small_GTP-bd"/>
</dbReference>
<dbReference type="NCBIfam" id="TIGR03594">
    <property type="entry name" value="GTPase_EngA"/>
    <property type="match status" value="1"/>
</dbReference>
<dbReference type="NCBIfam" id="TIGR00231">
    <property type="entry name" value="small_GTP"/>
    <property type="match status" value="2"/>
</dbReference>
<dbReference type="PANTHER" id="PTHR43834">
    <property type="entry name" value="GTPASE DER"/>
    <property type="match status" value="1"/>
</dbReference>
<dbReference type="PANTHER" id="PTHR43834:SF6">
    <property type="entry name" value="GTPASE DER"/>
    <property type="match status" value="1"/>
</dbReference>
<dbReference type="Pfam" id="PF14714">
    <property type="entry name" value="KH_dom-like"/>
    <property type="match status" value="1"/>
</dbReference>
<dbReference type="Pfam" id="PF01926">
    <property type="entry name" value="MMR_HSR1"/>
    <property type="match status" value="2"/>
</dbReference>
<dbReference type="PIRSF" id="PIRSF006485">
    <property type="entry name" value="GTP-binding_EngA"/>
    <property type="match status" value="1"/>
</dbReference>
<dbReference type="PRINTS" id="PR00326">
    <property type="entry name" value="GTP1OBG"/>
</dbReference>
<dbReference type="SUPFAM" id="SSF52540">
    <property type="entry name" value="P-loop containing nucleoside triphosphate hydrolases"/>
    <property type="match status" value="2"/>
</dbReference>
<dbReference type="PROSITE" id="PS51712">
    <property type="entry name" value="G_ENGA"/>
    <property type="match status" value="2"/>
</dbReference>
<name>DER_ECO8A</name>